<organism>
    <name type="scientific">Rattus norvegicus</name>
    <name type="common">Rat</name>
    <dbReference type="NCBI Taxonomy" id="10116"/>
    <lineage>
        <taxon>Eukaryota</taxon>
        <taxon>Metazoa</taxon>
        <taxon>Chordata</taxon>
        <taxon>Craniata</taxon>
        <taxon>Vertebrata</taxon>
        <taxon>Euteleostomi</taxon>
        <taxon>Mammalia</taxon>
        <taxon>Eutheria</taxon>
        <taxon>Euarchontoglires</taxon>
        <taxon>Glires</taxon>
        <taxon>Rodentia</taxon>
        <taxon>Myomorpha</taxon>
        <taxon>Muroidea</taxon>
        <taxon>Muridae</taxon>
        <taxon>Murinae</taxon>
        <taxon>Rattus</taxon>
    </lineage>
</organism>
<feature type="initiator methionine" description="Removed">
    <location>
        <position position="1"/>
    </location>
</feature>
<feature type="chain" id="PRO_0000073765" description="Visinin-like protein 1">
    <location>
        <begin position="2"/>
        <end position="191"/>
    </location>
</feature>
<feature type="domain" description="EF-hand 1" evidence="2">
    <location>
        <begin position="40"/>
        <end position="58"/>
    </location>
</feature>
<feature type="domain" description="EF-hand 2" evidence="2">
    <location>
        <begin position="60"/>
        <end position="95"/>
    </location>
</feature>
<feature type="domain" description="EF-hand 3" evidence="2">
    <location>
        <begin position="96"/>
        <end position="131"/>
    </location>
</feature>
<feature type="domain" description="EF-hand 4" evidence="2">
    <location>
        <begin position="146"/>
        <end position="181"/>
    </location>
</feature>
<feature type="binding site" evidence="2">
    <location>
        <position position="73"/>
    </location>
    <ligand>
        <name>Ca(2+)</name>
        <dbReference type="ChEBI" id="CHEBI:29108"/>
        <label>1</label>
    </ligand>
</feature>
<feature type="binding site" evidence="2">
    <location>
        <position position="75"/>
    </location>
    <ligand>
        <name>Ca(2+)</name>
        <dbReference type="ChEBI" id="CHEBI:29108"/>
        <label>1</label>
    </ligand>
</feature>
<feature type="binding site" evidence="2">
    <location>
        <position position="77"/>
    </location>
    <ligand>
        <name>Ca(2+)</name>
        <dbReference type="ChEBI" id="CHEBI:29108"/>
        <label>1</label>
    </ligand>
</feature>
<feature type="binding site" evidence="2">
    <location>
        <position position="79"/>
    </location>
    <ligand>
        <name>Ca(2+)</name>
        <dbReference type="ChEBI" id="CHEBI:29108"/>
        <label>1</label>
    </ligand>
</feature>
<feature type="binding site" evidence="2">
    <location>
        <position position="84"/>
    </location>
    <ligand>
        <name>Ca(2+)</name>
        <dbReference type="ChEBI" id="CHEBI:29108"/>
        <label>1</label>
    </ligand>
</feature>
<feature type="binding site" evidence="2">
    <location>
        <position position="109"/>
    </location>
    <ligand>
        <name>Ca(2+)</name>
        <dbReference type="ChEBI" id="CHEBI:29108"/>
        <label>2</label>
    </ligand>
</feature>
<feature type="binding site" evidence="2">
    <location>
        <position position="111"/>
    </location>
    <ligand>
        <name>Ca(2+)</name>
        <dbReference type="ChEBI" id="CHEBI:29108"/>
        <label>2</label>
    </ligand>
</feature>
<feature type="binding site" evidence="2">
    <location>
        <position position="113"/>
    </location>
    <ligand>
        <name>Ca(2+)</name>
        <dbReference type="ChEBI" id="CHEBI:29108"/>
        <label>2</label>
    </ligand>
</feature>
<feature type="binding site" evidence="2">
    <location>
        <position position="115"/>
    </location>
    <ligand>
        <name>Ca(2+)</name>
        <dbReference type="ChEBI" id="CHEBI:29108"/>
        <label>2</label>
    </ligand>
</feature>
<feature type="binding site" evidence="2">
    <location>
        <position position="120"/>
    </location>
    <ligand>
        <name>Ca(2+)</name>
        <dbReference type="ChEBI" id="CHEBI:29108"/>
        <label>2</label>
    </ligand>
</feature>
<feature type="binding site" evidence="2">
    <location>
        <position position="159"/>
    </location>
    <ligand>
        <name>Ca(2+)</name>
        <dbReference type="ChEBI" id="CHEBI:29108"/>
        <label>3</label>
    </ligand>
</feature>
<feature type="binding site" evidence="2">
    <location>
        <position position="161"/>
    </location>
    <ligand>
        <name>Ca(2+)</name>
        <dbReference type="ChEBI" id="CHEBI:29108"/>
        <label>3</label>
    </ligand>
</feature>
<feature type="binding site" evidence="2">
    <location>
        <position position="163"/>
    </location>
    <ligand>
        <name>Ca(2+)</name>
        <dbReference type="ChEBI" id="CHEBI:29108"/>
        <label>3</label>
    </ligand>
</feature>
<feature type="binding site" evidence="2">
    <location>
        <position position="165"/>
    </location>
    <ligand>
        <name>Ca(2+)</name>
        <dbReference type="ChEBI" id="CHEBI:29108"/>
        <label>3</label>
    </ligand>
</feature>
<feature type="binding site" evidence="2">
    <location>
        <position position="170"/>
    </location>
    <ligand>
        <name>Ca(2+)</name>
        <dbReference type="ChEBI" id="CHEBI:29108"/>
        <label>3</label>
    </ligand>
</feature>
<feature type="lipid moiety-binding region" description="N-myristoyl glycine" evidence="1">
    <location>
        <position position="2"/>
    </location>
</feature>
<keyword id="KW-0106">Calcium</keyword>
<keyword id="KW-0903">Direct protein sequencing</keyword>
<keyword id="KW-0449">Lipoprotein</keyword>
<keyword id="KW-0479">Metal-binding</keyword>
<keyword id="KW-0519">Myristate</keyword>
<keyword id="KW-1185">Reference proteome</keyword>
<keyword id="KW-0677">Repeat</keyword>
<sequence length="191" mass="22142">MGKQNSKLAPEVMEDLVKSTEFNEHELKQWYKGFLKDCPSGRLNLEEFQQLYVKFFPYGDASKFAQHAFRTFDKNGDGTIDFREFICALSITSRGSFEQKLNWAFNMYDLDGDGKITRVEMLEIIEAIYKMVGTVIMMKMNEDGLTPEQRVDKIFSKMDKNKDDQITLDEFKEAAKSDPSIVLLLQCDIQK</sequence>
<dbReference type="EMBL" id="D10666">
    <property type="protein sequence ID" value="BAA01517.1"/>
    <property type="molecule type" value="mRNA"/>
</dbReference>
<dbReference type="PIR" id="JH0605">
    <property type="entry name" value="JH0605"/>
</dbReference>
<dbReference type="SMR" id="P62762"/>
<dbReference type="CORUM" id="P62762"/>
<dbReference type="FunCoup" id="P62762">
    <property type="interactions" value="286"/>
</dbReference>
<dbReference type="IntAct" id="P62762">
    <property type="interactions" value="1"/>
</dbReference>
<dbReference type="MINT" id="P62762"/>
<dbReference type="STRING" id="10116.ENSRNOP00000007609"/>
<dbReference type="iPTMnet" id="P62762"/>
<dbReference type="PhosphoSitePlus" id="P62762"/>
<dbReference type="SwissPalm" id="P62762"/>
<dbReference type="PaxDb" id="10116-ENSRNOP00000007609"/>
<dbReference type="Ensembl" id="ENSRNOT00000007609.6">
    <property type="protein sequence ID" value="ENSRNOP00000007609.3"/>
    <property type="gene ID" value="ENSRNOG00000005345.6"/>
</dbReference>
<dbReference type="AGR" id="RGD:3966"/>
<dbReference type="RGD" id="3966">
    <property type="gene designation" value="Vsnl1"/>
</dbReference>
<dbReference type="eggNOG" id="KOG0044">
    <property type="taxonomic scope" value="Eukaryota"/>
</dbReference>
<dbReference type="GeneTree" id="ENSGT00940000156513"/>
<dbReference type="HOGENOM" id="CLU_072366_1_0_1"/>
<dbReference type="InParanoid" id="P62762"/>
<dbReference type="OMA" id="HISRREM"/>
<dbReference type="OrthoDB" id="191686at2759"/>
<dbReference type="PhylomeDB" id="P62762"/>
<dbReference type="TreeFam" id="TF300009"/>
<dbReference type="PRO" id="PR:P62762"/>
<dbReference type="Proteomes" id="UP000002494">
    <property type="component" value="Chromosome 6"/>
</dbReference>
<dbReference type="Bgee" id="ENSRNOG00000005345">
    <property type="expression patterns" value="Expressed in cerebellum and 14 other cell types or tissues"/>
</dbReference>
<dbReference type="GO" id="GO:0005829">
    <property type="term" value="C:cytosol"/>
    <property type="evidence" value="ECO:0000266"/>
    <property type="project" value="RGD"/>
</dbReference>
<dbReference type="GO" id="GO:0016020">
    <property type="term" value="C:membrane"/>
    <property type="evidence" value="ECO:0000266"/>
    <property type="project" value="RGD"/>
</dbReference>
<dbReference type="GO" id="GO:0005509">
    <property type="term" value="F:calcium ion binding"/>
    <property type="evidence" value="ECO:0000318"/>
    <property type="project" value="GO_Central"/>
</dbReference>
<dbReference type="GO" id="GO:0019722">
    <property type="term" value="P:calcium-mediated signaling"/>
    <property type="evidence" value="ECO:0000304"/>
    <property type="project" value="RGD"/>
</dbReference>
<dbReference type="GO" id="GO:0007417">
    <property type="term" value="P:central nervous system development"/>
    <property type="evidence" value="ECO:0000304"/>
    <property type="project" value="ProtInc"/>
</dbReference>
<dbReference type="GO" id="GO:0046676">
    <property type="term" value="P:negative regulation of insulin secretion"/>
    <property type="evidence" value="ECO:0000266"/>
    <property type="project" value="RGD"/>
</dbReference>
<dbReference type="GO" id="GO:0045921">
    <property type="term" value="P:positive regulation of exocytosis"/>
    <property type="evidence" value="ECO:0000266"/>
    <property type="project" value="RGD"/>
</dbReference>
<dbReference type="GO" id="GO:0035774">
    <property type="term" value="P:positive regulation of insulin secretion involved in cellular response to glucose stimulus"/>
    <property type="evidence" value="ECO:0000266"/>
    <property type="project" value="RGD"/>
</dbReference>
<dbReference type="GO" id="GO:0009966">
    <property type="term" value="P:regulation of signal transduction"/>
    <property type="evidence" value="ECO:0000318"/>
    <property type="project" value="GO_Central"/>
</dbReference>
<dbReference type="CDD" id="cd00051">
    <property type="entry name" value="EFh"/>
    <property type="match status" value="2"/>
</dbReference>
<dbReference type="FunFam" id="1.10.238.10:FF:000009">
    <property type="entry name" value="Visinin-like protein 1"/>
    <property type="match status" value="1"/>
</dbReference>
<dbReference type="Gene3D" id="1.10.238.10">
    <property type="entry name" value="EF-hand"/>
    <property type="match status" value="1"/>
</dbReference>
<dbReference type="InterPro" id="IPR011992">
    <property type="entry name" value="EF-hand-dom_pair"/>
</dbReference>
<dbReference type="InterPro" id="IPR018247">
    <property type="entry name" value="EF_Hand_1_Ca_BS"/>
</dbReference>
<dbReference type="InterPro" id="IPR002048">
    <property type="entry name" value="EF_hand_dom"/>
</dbReference>
<dbReference type="InterPro" id="IPR028846">
    <property type="entry name" value="Recoverin"/>
</dbReference>
<dbReference type="PANTHER" id="PTHR23055">
    <property type="entry name" value="CALCIUM BINDING PROTEINS"/>
    <property type="match status" value="1"/>
</dbReference>
<dbReference type="PANTHER" id="PTHR23055:SF101">
    <property type="entry name" value="VISININ-LIKE PROTEIN 1"/>
    <property type="match status" value="1"/>
</dbReference>
<dbReference type="Pfam" id="PF00036">
    <property type="entry name" value="EF-hand_1"/>
    <property type="match status" value="1"/>
</dbReference>
<dbReference type="Pfam" id="PF13499">
    <property type="entry name" value="EF-hand_7"/>
    <property type="match status" value="1"/>
</dbReference>
<dbReference type="PRINTS" id="PR00450">
    <property type="entry name" value="RECOVERIN"/>
</dbReference>
<dbReference type="SMART" id="SM00054">
    <property type="entry name" value="EFh"/>
    <property type="match status" value="3"/>
</dbReference>
<dbReference type="SUPFAM" id="SSF47473">
    <property type="entry name" value="EF-hand"/>
    <property type="match status" value="1"/>
</dbReference>
<dbReference type="PROSITE" id="PS00018">
    <property type="entry name" value="EF_HAND_1"/>
    <property type="match status" value="3"/>
</dbReference>
<dbReference type="PROSITE" id="PS50222">
    <property type="entry name" value="EF_HAND_2"/>
    <property type="match status" value="4"/>
</dbReference>
<name>VISL1_RAT</name>
<accession>P62762</accession>
<accession>P28677</accession>
<accession>P29103</accession>
<accession>P42323</accession>
<accession>Q9UM20</accession>
<comment type="function">
    <text>Regulates (in vitro) the inhibition of rhodopsin phosphorylation in a calcium-dependent manner.</text>
</comment>
<comment type="tissue specificity">
    <text>Brain and retina. Neuron-specific in the central and peripheral nervous system.</text>
</comment>
<comment type="miscellaneous">
    <text>Probably binds three calcium ions.</text>
</comment>
<comment type="similarity">
    <text evidence="3">Belongs to the recoverin family.</text>
</comment>
<protein>
    <recommendedName>
        <fullName>Visinin-like protein 1</fullName>
        <shortName>VILIP</shortName>
    </recommendedName>
    <alternativeName>
        <fullName>21 kDa CABP</fullName>
    </alternativeName>
    <alternativeName>
        <fullName>Neural visinin-like protein 1</fullName>
        <shortName>NVL-1</shortName>
        <shortName>NVP-1</shortName>
    </alternativeName>
</protein>
<gene>
    <name type="primary">Vsnl1</name>
    <name type="synonym">Visl1</name>
</gene>
<reference key="1">
    <citation type="journal article" date="1992" name="Biochem. Biophys. Res. Commun.">
        <title>cDNA cloning of a neural visinin-like Ca(2+)-binding protein.</title>
        <authorList>
            <person name="Kuno T."/>
            <person name="Kajimoto Y."/>
            <person name="Hashimoto T."/>
            <person name="Mukai H."/>
            <person name="Shirai Y."/>
            <person name="Saheki S."/>
            <person name="Tanaka C."/>
        </authorList>
    </citation>
    <scope>NUCLEOTIDE SEQUENCE [MRNA]</scope>
    <scope>PROTEIN SEQUENCE OF 8-32; 55-63; 101-130; 140-153 AND 163-172</scope>
    <source>
        <strain>Wistar</strain>
        <tissue>Brain</tissue>
    </source>
</reference>
<reference key="2">
    <citation type="submission" date="2007-09" db="UniProtKB">
        <authorList>
            <person name="Lubec G."/>
            <person name="Kang S.U."/>
            <person name="Lubec S."/>
        </authorList>
    </citation>
    <scope>PROTEIN SEQUENCE OF 8-28; 43-54; 64-94; 101-115; 119-150; 161-172 AND 254-262</scope>
    <scope>IDENTIFICATION BY MASS SPECTROMETRY</scope>
    <source>
        <strain>Sprague-Dawley</strain>
        <tissue>Brain</tissue>
    </source>
</reference>
<evidence type="ECO:0000250" key="1"/>
<evidence type="ECO:0000255" key="2">
    <source>
        <dbReference type="PROSITE-ProRule" id="PRU00448"/>
    </source>
</evidence>
<evidence type="ECO:0000305" key="3"/>
<proteinExistence type="evidence at protein level"/>